<proteinExistence type="inferred from homology"/>
<comment type="function">
    <text evidence="1">Might take part in the signal recognition particle (SRP) pathway. This is inferred from the conservation of its genetic proximity to ftsY/ffh. May be a regulatory protein.</text>
</comment>
<comment type="similarity">
    <text evidence="1">Belongs to the UPF0122 family.</text>
</comment>
<dbReference type="EMBL" id="AE005176">
    <property type="protein sequence ID" value="AAK05532.1"/>
    <property type="molecule type" value="Genomic_DNA"/>
</dbReference>
<dbReference type="PIR" id="B86804">
    <property type="entry name" value="B86804"/>
</dbReference>
<dbReference type="RefSeq" id="NP_267590.1">
    <property type="nucleotide sequence ID" value="NC_002662.1"/>
</dbReference>
<dbReference type="RefSeq" id="WP_003130477.1">
    <property type="nucleotide sequence ID" value="NC_002662.1"/>
</dbReference>
<dbReference type="SMR" id="Q9CFN3"/>
<dbReference type="PaxDb" id="272623-L57401"/>
<dbReference type="EnsemblBacteria" id="AAK05532">
    <property type="protein sequence ID" value="AAK05532"/>
    <property type="gene ID" value="L57401"/>
</dbReference>
<dbReference type="KEGG" id="lla:L57401"/>
<dbReference type="PATRIC" id="fig|272623.7.peg.1541"/>
<dbReference type="eggNOG" id="COG2739">
    <property type="taxonomic scope" value="Bacteria"/>
</dbReference>
<dbReference type="HOGENOM" id="CLU_129218_1_0_9"/>
<dbReference type="OrthoDB" id="6392at2"/>
<dbReference type="Proteomes" id="UP000002196">
    <property type="component" value="Chromosome"/>
</dbReference>
<dbReference type="Gene3D" id="1.10.10.10">
    <property type="entry name" value="Winged helix-like DNA-binding domain superfamily/Winged helix DNA-binding domain"/>
    <property type="match status" value="1"/>
</dbReference>
<dbReference type="HAMAP" id="MF_00245">
    <property type="entry name" value="UPF0122"/>
    <property type="match status" value="1"/>
</dbReference>
<dbReference type="InterPro" id="IPR013324">
    <property type="entry name" value="RNA_pol_sigma_r3/r4-like"/>
</dbReference>
<dbReference type="InterPro" id="IPR007394">
    <property type="entry name" value="UPF0122"/>
</dbReference>
<dbReference type="InterPro" id="IPR054831">
    <property type="entry name" value="UPF0122_fam_protein"/>
</dbReference>
<dbReference type="InterPro" id="IPR036388">
    <property type="entry name" value="WH-like_DNA-bd_sf"/>
</dbReference>
<dbReference type="NCBIfam" id="NF001066">
    <property type="entry name" value="PRK00118.1-1"/>
    <property type="match status" value="1"/>
</dbReference>
<dbReference type="NCBIfam" id="NF001068">
    <property type="entry name" value="PRK00118.1-4"/>
    <property type="match status" value="1"/>
</dbReference>
<dbReference type="NCBIfam" id="NF001070">
    <property type="entry name" value="PRK00118.1-6"/>
    <property type="match status" value="1"/>
</dbReference>
<dbReference type="NCBIfam" id="NF045758">
    <property type="entry name" value="YlxM"/>
    <property type="match status" value="1"/>
</dbReference>
<dbReference type="PANTHER" id="PTHR40083">
    <property type="entry name" value="UPF0122 PROTEIN CBO2450/CLC_2298"/>
    <property type="match status" value="1"/>
</dbReference>
<dbReference type="PANTHER" id="PTHR40083:SF1">
    <property type="entry name" value="UPF0122 PROTEIN YLXM"/>
    <property type="match status" value="1"/>
</dbReference>
<dbReference type="Pfam" id="PF04297">
    <property type="entry name" value="UPF0122"/>
    <property type="match status" value="1"/>
</dbReference>
<dbReference type="SUPFAM" id="SSF88659">
    <property type="entry name" value="Sigma3 and sigma4 domains of RNA polymerase sigma factors"/>
    <property type="match status" value="1"/>
</dbReference>
<name>YOFM_LACLA</name>
<evidence type="ECO:0000255" key="1">
    <source>
        <dbReference type="HAMAP-Rule" id="MF_00245"/>
    </source>
</evidence>
<organism>
    <name type="scientific">Lactococcus lactis subsp. lactis (strain IL1403)</name>
    <name type="common">Streptococcus lactis</name>
    <dbReference type="NCBI Taxonomy" id="272623"/>
    <lineage>
        <taxon>Bacteria</taxon>
        <taxon>Bacillati</taxon>
        <taxon>Bacillota</taxon>
        <taxon>Bacilli</taxon>
        <taxon>Lactobacillales</taxon>
        <taxon>Streptococcaceae</taxon>
        <taxon>Lactococcus</taxon>
    </lineage>
</organism>
<protein>
    <recommendedName>
        <fullName evidence="1">UPF0122 protein YofM</fullName>
    </recommendedName>
</protein>
<accession>Q9CFN3</accession>
<feature type="chain" id="PRO_0000211867" description="UPF0122 protein YofM">
    <location>
        <begin position="1"/>
        <end position="111"/>
    </location>
</feature>
<gene>
    <name type="primary">yofM</name>
    <name type="ordered locus">LL1434</name>
    <name type="ORF">L57401</name>
</gene>
<sequence>MEIEKTNRMNTLFEFYATLLTDKQMNYIELYYADDYSLAEIAEEFNISRQAVYDNIKRTEKVLESYEEKLHLFSNYVVRNQLLEELMKKYSTDQYLITKLQEIQQIDEEEF</sequence>
<keyword id="KW-1185">Reference proteome</keyword>
<reference key="1">
    <citation type="journal article" date="2001" name="Genome Res.">
        <title>The complete genome sequence of the lactic acid bacterium Lactococcus lactis ssp. lactis IL1403.</title>
        <authorList>
            <person name="Bolotin A."/>
            <person name="Wincker P."/>
            <person name="Mauger S."/>
            <person name="Jaillon O."/>
            <person name="Malarme K."/>
            <person name="Weissenbach J."/>
            <person name="Ehrlich S.D."/>
            <person name="Sorokin A."/>
        </authorList>
    </citation>
    <scope>NUCLEOTIDE SEQUENCE [LARGE SCALE GENOMIC DNA]</scope>
    <source>
        <strain>IL1403</strain>
    </source>
</reference>